<name>OPGD_XYLFA</name>
<feature type="signal peptide" description="Tat-type signal" evidence="2">
    <location>
        <begin position="1"/>
        <end position="36"/>
    </location>
</feature>
<feature type="chain" id="PRO_0000020218" description="Glucans biosynthesis protein D">
    <location>
        <begin position="37"/>
        <end position="537"/>
    </location>
</feature>
<keyword id="KW-0574">Periplasm</keyword>
<keyword id="KW-0732">Signal</keyword>
<sequence length="537" mass="61552">MLMYRRDFLKSVTAAWVAFGLPNPLGGPFATNRVIALRRLGQSQRFDYEWLKEHARALAAAPYHSRKRVLPTPLERLSWDQYQSIRYRQDHALWADSDAHFQVKFFHLGLYFHSPVRMYEVVDGMAQELAYDPAAFDYGSSGLNGKRLPKDLGFAGFRLNTRKDTDRDFAAFLGASYFRAVGQEGQYGQSARGLAVNTGSSGPEEFPDFIAYYLEQPTSDADTVVLYGLLDSPSIAGAYRFSITNGDVLLMDIDSALYPRETIERLGIAPCTSMYQVGENDRRMGWDWRPEIHDTDGLFLLTGNGEWIWRPLCNPPYLRFNMFLDNNPRGFGLLQRDRDFDHYQDDGVFYEKRPCLWVEPKHGWGEGSVQLVEIPTFDETFDNIVSFWNPRNKPHPGQELLFGYRLYWGGLPPVSSSLAYCVATRTGLGGVVGQKRKYFSWRFAVDFVGGKLAALASVHDVSVEPVLHMTRGRAEIVSARPLHEIRGYRVMFDVVPLEDSTQQIDIRLYLRDTNGEPLTETWLYQWMPPILEERKMY</sequence>
<proteinExistence type="inferred from homology"/>
<comment type="function">
    <text evidence="1">Probably involved in the control of the structural glucose backbone of osmoregulated periplasmic glucans (OPGs).</text>
</comment>
<comment type="pathway">
    <text>Glycan metabolism; osmoregulated periplasmic glucan (OPG) biosynthesis.</text>
</comment>
<comment type="subcellular location">
    <subcellularLocation>
        <location evidence="1">Periplasm</location>
    </subcellularLocation>
</comment>
<comment type="PTM">
    <text>Predicted to be exported by the Tat system. The position of the signal peptide cleavage has not been experimentally proven.</text>
</comment>
<comment type="similarity">
    <text evidence="3">Belongs to the OpgD/OpgG family.</text>
</comment>
<dbReference type="EMBL" id="AE003849">
    <property type="protein sequence ID" value="AAF85479.1"/>
    <property type="molecule type" value="Genomic_DNA"/>
</dbReference>
<dbReference type="PIR" id="A82527">
    <property type="entry name" value="A82527"/>
</dbReference>
<dbReference type="SMR" id="Q9PA38"/>
<dbReference type="STRING" id="160492.XF_2682"/>
<dbReference type="KEGG" id="xfa:XF_2682"/>
<dbReference type="eggNOG" id="COG3131">
    <property type="taxonomic scope" value="Bacteria"/>
</dbReference>
<dbReference type="HOGENOM" id="CLU_023403_2_0_6"/>
<dbReference type="UniPathway" id="UPA00637"/>
<dbReference type="Proteomes" id="UP000000812">
    <property type="component" value="Chromosome"/>
</dbReference>
<dbReference type="GO" id="GO:0030288">
    <property type="term" value="C:outer membrane-bounded periplasmic space"/>
    <property type="evidence" value="ECO:0007669"/>
    <property type="project" value="TreeGrafter"/>
</dbReference>
<dbReference type="GO" id="GO:0030246">
    <property type="term" value="F:carbohydrate binding"/>
    <property type="evidence" value="ECO:0007669"/>
    <property type="project" value="InterPro"/>
</dbReference>
<dbReference type="GO" id="GO:0003824">
    <property type="term" value="F:catalytic activity"/>
    <property type="evidence" value="ECO:0007669"/>
    <property type="project" value="InterPro"/>
</dbReference>
<dbReference type="GO" id="GO:0051274">
    <property type="term" value="P:beta-glucan biosynthetic process"/>
    <property type="evidence" value="ECO:0007669"/>
    <property type="project" value="TreeGrafter"/>
</dbReference>
<dbReference type="FunFam" id="2.70.98.10:FF:000001">
    <property type="entry name" value="Glucans biosynthesis protein G"/>
    <property type="match status" value="1"/>
</dbReference>
<dbReference type="Gene3D" id="2.70.98.10">
    <property type="match status" value="1"/>
</dbReference>
<dbReference type="Gene3D" id="2.60.40.10">
    <property type="entry name" value="Immunoglobulins"/>
    <property type="match status" value="1"/>
</dbReference>
<dbReference type="HAMAP" id="MF_01068">
    <property type="entry name" value="MdoD_OpgD"/>
    <property type="match status" value="1"/>
</dbReference>
<dbReference type="InterPro" id="IPR011013">
    <property type="entry name" value="Gal_mutarotase_sf_dom"/>
</dbReference>
<dbReference type="InterPro" id="IPR014718">
    <property type="entry name" value="GH-type_carb-bd"/>
</dbReference>
<dbReference type="InterPro" id="IPR023724">
    <property type="entry name" value="Glucan_biosyn_MdoD"/>
</dbReference>
<dbReference type="InterPro" id="IPR014438">
    <property type="entry name" value="Glucan_biosyn_MdoG/MdoD"/>
</dbReference>
<dbReference type="InterPro" id="IPR007444">
    <property type="entry name" value="Glucan_biosyn_MdoG_C"/>
</dbReference>
<dbReference type="InterPro" id="IPR013783">
    <property type="entry name" value="Ig-like_fold"/>
</dbReference>
<dbReference type="InterPro" id="IPR014756">
    <property type="entry name" value="Ig_E-set"/>
</dbReference>
<dbReference type="PANTHER" id="PTHR30504">
    <property type="entry name" value="GLUCANS BIOSYNTHESIS PROTEIN"/>
    <property type="match status" value="1"/>
</dbReference>
<dbReference type="PANTHER" id="PTHR30504:SF3">
    <property type="entry name" value="GLUCANS BIOSYNTHESIS PROTEIN D"/>
    <property type="match status" value="1"/>
</dbReference>
<dbReference type="Pfam" id="PF04349">
    <property type="entry name" value="MdoG"/>
    <property type="match status" value="1"/>
</dbReference>
<dbReference type="PIRSF" id="PIRSF006281">
    <property type="entry name" value="MdoG"/>
    <property type="match status" value="1"/>
</dbReference>
<dbReference type="SUPFAM" id="SSF81296">
    <property type="entry name" value="E set domains"/>
    <property type="match status" value="1"/>
</dbReference>
<dbReference type="SUPFAM" id="SSF74650">
    <property type="entry name" value="Galactose mutarotase-like"/>
    <property type="match status" value="1"/>
</dbReference>
<protein>
    <recommendedName>
        <fullName>Glucans biosynthesis protein D</fullName>
    </recommendedName>
</protein>
<reference key="1">
    <citation type="journal article" date="2000" name="Nature">
        <title>The genome sequence of the plant pathogen Xylella fastidiosa.</title>
        <authorList>
            <person name="Simpson A.J.G."/>
            <person name="Reinach F.C."/>
            <person name="Arruda P."/>
            <person name="Abreu F.A."/>
            <person name="Acencio M."/>
            <person name="Alvarenga R."/>
            <person name="Alves L.M.C."/>
            <person name="Araya J.E."/>
            <person name="Baia G.S."/>
            <person name="Baptista C.S."/>
            <person name="Barros M.H."/>
            <person name="Bonaccorsi E.D."/>
            <person name="Bordin S."/>
            <person name="Bove J.M."/>
            <person name="Briones M.R.S."/>
            <person name="Bueno M.R.P."/>
            <person name="Camargo A.A."/>
            <person name="Camargo L.E.A."/>
            <person name="Carraro D.M."/>
            <person name="Carrer H."/>
            <person name="Colauto N.B."/>
            <person name="Colombo C."/>
            <person name="Costa F.F."/>
            <person name="Costa M.C.R."/>
            <person name="Costa-Neto C.M."/>
            <person name="Coutinho L.L."/>
            <person name="Cristofani M."/>
            <person name="Dias-Neto E."/>
            <person name="Docena C."/>
            <person name="El-Dorry H."/>
            <person name="Facincani A.P."/>
            <person name="Ferreira A.J.S."/>
            <person name="Ferreira V.C.A."/>
            <person name="Ferro J.A."/>
            <person name="Fraga J.S."/>
            <person name="Franca S.C."/>
            <person name="Franco M.C."/>
            <person name="Frohme M."/>
            <person name="Furlan L.R."/>
            <person name="Garnier M."/>
            <person name="Goldman G.H."/>
            <person name="Goldman M.H.S."/>
            <person name="Gomes S.L."/>
            <person name="Gruber A."/>
            <person name="Ho P.L."/>
            <person name="Hoheisel J.D."/>
            <person name="Junqueira M.L."/>
            <person name="Kemper E.L."/>
            <person name="Kitajima J.P."/>
            <person name="Krieger J.E."/>
            <person name="Kuramae E.E."/>
            <person name="Laigret F."/>
            <person name="Lambais M.R."/>
            <person name="Leite L.C.C."/>
            <person name="Lemos E.G.M."/>
            <person name="Lemos M.V.F."/>
            <person name="Lopes S.A."/>
            <person name="Lopes C.R."/>
            <person name="Machado J.A."/>
            <person name="Machado M.A."/>
            <person name="Madeira A.M.B.N."/>
            <person name="Madeira H.M.F."/>
            <person name="Marino C.L."/>
            <person name="Marques M.V."/>
            <person name="Martins E.A.L."/>
            <person name="Martins E.M.F."/>
            <person name="Matsukuma A.Y."/>
            <person name="Menck C.F.M."/>
            <person name="Miracca E.C."/>
            <person name="Miyaki C.Y."/>
            <person name="Monteiro-Vitorello C.B."/>
            <person name="Moon D.H."/>
            <person name="Nagai M.A."/>
            <person name="Nascimento A.L.T.O."/>
            <person name="Netto L.E.S."/>
            <person name="Nhani A. Jr."/>
            <person name="Nobrega F.G."/>
            <person name="Nunes L.R."/>
            <person name="Oliveira M.A."/>
            <person name="de Oliveira M.C."/>
            <person name="de Oliveira R.C."/>
            <person name="Palmieri D.A."/>
            <person name="Paris A."/>
            <person name="Peixoto B.R."/>
            <person name="Pereira G.A.G."/>
            <person name="Pereira H.A. Jr."/>
            <person name="Pesquero J.B."/>
            <person name="Quaggio R.B."/>
            <person name="Roberto P.G."/>
            <person name="Rodrigues V."/>
            <person name="de Rosa A.J.M."/>
            <person name="de Rosa V.E. Jr."/>
            <person name="de Sa R.G."/>
            <person name="Santelli R.V."/>
            <person name="Sawasaki H.E."/>
            <person name="da Silva A.C.R."/>
            <person name="da Silva A.M."/>
            <person name="da Silva F.R."/>
            <person name="Silva W.A. Jr."/>
            <person name="da Silveira J.F."/>
            <person name="Silvestri M.L.Z."/>
            <person name="Siqueira W.J."/>
            <person name="de Souza A.A."/>
            <person name="de Souza A.P."/>
            <person name="Terenzi M.F."/>
            <person name="Truffi D."/>
            <person name="Tsai S.M."/>
            <person name="Tsuhako M.H."/>
            <person name="Vallada H."/>
            <person name="Van Sluys M.A."/>
            <person name="Verjovski-Almeida S."/>
            <person name="Vettore A.L."/>
            <person name="Zago M.A."/>
            <person name="Zatz M."/>
            <person name="Meidanis J."/>
            <person name="Setubal J.C."/>
        </authorList>
    </citation>
    <scope>NUCLEOTIDE SEQUENCE [LARGE SCALE GENOMIC DNA]</scope>
    <source>
        <strain>9a5c</strain>
    </source>
</reference>
<gene>
    <name type="primary">opgD</name>
    <name type="ordered locus">XF_2682</name>
</gene>
<accession>Q9PA38</accession>
<evidence type="ECO:0000250" key="1"/>
<evidence type="ECO:0000255" key="2"/>
<evidence type="ECO:0000305" key="3"/>
<organism>
    <name type="scientific">Xylella fastidiosa (strain 9a5c)</name>
    <dbReference type="NCBI Taxonomy" id="160492"/>
    <lineage>
        <taxon>Bacteria</taxon>
        <taxon>Pseudomonadati</taxon>
        <taxon>Pseudomonadota</taxon>
        <taxon>Gammaproteobacteria</taxon>
        <taxon>Lysobacterales</taxon>
        <taxon>Lysobacteraceae</taxon>
        <taxon>Xylella</taxon>
    </lineage>
</organism>